<reference key="1">
    <citation type="journal article" date="2011" name="Environ. Microbiol.">
        <title>A blueprint of ectoine metabolism from the genome of the industrial producer Halomonas elongata DSM 2581(T).</title>
        <authorList>
            <person name="Schwibbert K."/>
            <person name="Marin-Sanguino A."/>
            <person name="Bagyan I."/>
            <person name="Heidrich G."/>
            <person name="Lentzen G."/>
            <person name="Seitz H."/>
            <person name="Rampp M."/>
            <person name="Schuster S.C."/>
            <person name="Klenk H.P."/>
            <person name="Pfeiffer F."/>
            <person name="Oesterhelt D."/>
            <person name="Kunte H.J."/>
        </authorList>
    </citation>
    <scope>NUCLEOTIDE SEQUENCE [LARGE SCALE GENOMIC DNA]</scope>
    <source>
        <strain>ATCC 33173 / DSM 2581 / NBRC 15536 / NCIMB 2198 / 1H9</strain>
    </source>
</reference>
<reference key="2">
    <citation type="journal article" date="1998" name="FEMS Microbiol. Lett.">
        <title>Construction and characterization of an NaCl-sensitive mutant of Halomonas elongata impaired in ectoine biosynthesis.</title>
        <authorList>
            <person name="Goeller K."/>
            <person name="Ofer A."/>
            <person name="Galinski E.A."/>
        </authorList>
    </citation>
    <scope>NUCLEOTIDE SEQUENCE [GENOMIC DNA] OF 1-66</scope>
    <source>
        <strain>ATCC 33173 / DSM 2581 / NBRC 15536 / NCIMB 2198 / 1H9</strain>
    </source>
</reference>
<reference key="3">
    <citation type="journal article" date="1999" name="J. Bacteriol.">
        <title>Characterization of biosynthetic enzymes for ectoine as a compatible solute in a moderately halophilic eubacterium, Halomonas elongata.</title>
        <authorList>
            <person name="Ono H."/>
            <person name="Sawada K."/>
            <person name="Khunajakr N."/>
            <person name="Tao T."/>
            <person name="Yamamoto M."/>
            <person name="Hiramoto M."/>
            <person name="Shinmyo A."/>
            <person name="Takano M."/>
            <person name="Murooka Y."/>
        </authorList>
    </citation>
    <scope>FUNCTION</scope>
    <scope>CATALYTIC ACTIVITY</scope>
    <scope>BIOPHYSICOCHEMICAL PROPERTIES</scope>
    <scope>CHARACTERIZATION</scope>
    <source>
        <strain>OUT30018</strain>
    </source>
</reference>
<protein>
    <recommendedName>
        <fullName>L-ectoine synthase</fullName>
        <ecNumber evidence="2">4.2.1.108</ecNumber>
    </recommendedName>
    <alternativeName>
        <fullName>N-acetyldiaminobutyrate dehydratase</fullName>
    </alternativeName>
</protein>
<sequence length="137" mass="15458">MIVRNLEEARQTDRLVTAENGNWDSTRLSLAEDGGNCSFHITRIFEGTETHIHYKHHFEAVYCIEGEGEVETLADGKIWPIKPGDIYILDQHDEHLLRASKTMHLACVFTPGLTGNEVHREDGSYAPADEADDQKPL</sequence>
<feature type="chain" id="PRO_0000220152" description="L-ectoine synthase">
    <location>
        <begin position="1"/>
        <end position="137"/>
    </location>
</feature>
<feature type="region of interest" description="Disordered" evidence="1">
    <location>
        <begin position="118"/>
        <end position="137"/>
    </location>
</feature>
<name>ECTC_HALED</name>
<evidence type="ECO:0000256" key="1">
    <source>
        <dbReference type="SAM" id="MobiDB-lite"/>
    </source>
</evidence>
<evidence type="ECO:0000269" key="2">
    <source>
    </source>
</evidence>
<evidence type="ECO:0000305" key="3"/>
<accession>O52251</accession>
<accession>E1VCW9</accession>
<keyword id="KW-0456">Lyase</keyword>
<comment type="function">
    <text evidence="2">Catalyzes the circularization of gamma-N-acetyl-alpha,gamma-diaminobutyric acid (ADABA) to ectoine (1,4,5,6-tetrahydro-2-methyl-4-pyrimidine carboxylic acid), which is an excellent osmoprotectant. Does not act on N-acetylated amino acids like N-alpha-acetyl-L-asparagine,N-alpha-acetyl-L-ornithine, N-alpha-acetyl-L-lysine and N-epsilon-acetyl-L-lysine.</text>
</comment>
<comment type="catalytic activity">
    <reaction evidence="2">
        <text>(2S)-4-acetamido-2-aminobutanoate = L-ectoine + H2O</text>
        <dbReference type="Rhea" id="RHEA:17281"/>
        <dbReference type="ChEBI" id="CHEBI:15377"/>
        <dbReference type="ChEBI" id="CHEBI:58515"/>
        <dbReference type="ChEBI" id="CHEBI:58929"/>
        <dbReference type="EC" id="4.2.1.108"/>
    </reaction>
</comment>
<comment type="activity regulation">
    <text>Seems to require potassium ions for its activity and stability. Slightly inhibited by N-ethylmaleimide.</text>
</comment>
<comment type="biophysicochemical properties">
    <kinetics>
        <KM evidence="2">11 mM for ADABA (in the presence of 0.05 M NaCl)</KM>
        <KM evidence="2">8.4 mM for ADABA (in the presence of 0.77 M NaCl)</KM>
        <Vmax evidence="2">85.0 umol/min/mg enzyme (in the presence of 0.05 M NaCl)</Vmax>
        <Vmax evidence="2">56.0 umol/min/mg enzyme (in the presence of 0.77 M NaCl)</Vmax>
    </kinetics>
    <phDependence>
        <text evidence="2">Optimum pH is 8.5-9.0.</text>
    </phDependence>
    <temperatureDependence>
        <text evidence="2">Optimum temperature is 0-10 degrees Celsius in the presence of 0.05 M NaCl, 15 degrees Celsius in the presence of 0.77 M NaCl, and 30 degrees Celsius in the presence of 3.0 M NaCl.</text>
    </temperatureDependence>
</comment>
<comment type="pathway">
    <text>Amine and polyamine biosynthesis; ectoine biosynthesis; L-ectoine from L-aspartate 4-semialdehyde: step 3/3.</text>
</comment>
<comment type="similarity">
    <text evidence="3">Belongs to the ectoine synthase family.</text>
</comment>
<proteinExistence type="evidence at protein level"/>
<organism>
    <name type="scientific">Halomonas elongata (strain ATCC 33173 / DSM 2581 / NBRC 15536 / NCIMB 2198 / 1H9)</name>
    <dbReference type="NCBI Taxonomy" id="768066"/>
    <lineage>
        <taxon>Bacteria</taxon>
        <taxon>Pseudomonadati</taxon>
        <taxon>Pseudomonadota</taxon>
        <taxon>Gammaproteobacteria</taxon>
        <taxon>Oceanospirillales</taxon>
        <taxon>Halomonadaceae</taxon>
        <taxon>Halomonas</taxon>
    </lineage>
</organism>
<dbReference type="EC" id="4.2.1.108" evidence="2"/>
<dbReference type="EMBL" id="FN869568">
    <property type="protein sequence ID" value="CBV42474.1"/>
    <property type="molecule type" value="Genomic_DNA"/>
</dbReference>
<dbReference type="EMBL" id="AF031489">
    <property type="protein sequence ID" value="AAC15883.1"/>
    <property type="molecule type" value="Genomic_DNA"/>
</dbReference>
<dbReference type="RefSeq" id="WP_013332346.1">
    <property type="nucleotide sequence ID" value="NC_014532.2"/>
</dbReference>
<dbReference type="SMR" id="O52251"/>
<dbReference type="STRING" id="768066.HELO_2590"/>
<dbReference type="GeneID" id="91009909"/>
<dbReference type="KEGG" id="hel:HELO_2590"/>
<dbReference type="eggNOG" id="COG1917">
    <property type="taxonomic scope" value="Bacteria"/>
</dbReference>
<dbReference type="HOGENOM" id="CLU_154525_0_0_6"/>
<dbReference type="OrthoDB" id="9801830at2"/>
<dbReference type="BioCyc" id="MetaCyc:MONOMER-803"/>
<dbReference type="UniPathway" id="UPA00067">
    <property type="reaction ID" value="UER00123"/>
</dbReference>
<dbReference type="Proteomes" id="UP000008707">
    <property type="component" value="Chromosome"/>
</dbReference>
<dbReference type="GO" id="GO:0033990">
    <property type="term" value="F:ectoine synthase activity"/>
    <property type="evidence" value="ECO:0007669"/>
    <property type="project" value="UniProtKB-EC"/>
</dbReference>
<dbReference type="GO" id="GO:0019491">
    <property type="term" value="P:ectoine biosynthetic process"/>
    <property type="evidence" value="ECO:0007669"/>
    <property type="project" value="UniProtKB-UniRule"/>
</dbReference>
<dbReference type="CDD" id="cd06978">
    <property type="entry name" value="cupin_EctC"/>
    <property type="match status" value="1"/>
</dbReference>
<dbReference type="Gene3D" id="2.60.120.10">
    <property type="entry name" value="Jelly Rolls"/>
    <property type="match status" value="1"/>
</dbReference>
<dbReference type="HAMAP" id="MF_01255">
    <property type="entry name" value="Ectoine_synth"/>
    <property type="match status" value="1"/>
</dbReference>
<dbReference type="InterPro" id="IPR010462">
    <property type="entry name" value="Ectoine_synth"/>
</dbReference>
<dbReference type="InterPro" id="IPR014710">
    <property type="entry name" value="RmlC-like_jellyroll"/>
</dbReference>
<dbReference type="InterPro" id="IPR011051">
    <property type="entry name" value="RmlC_Cupin_sf"/>
</dbReference>
<dbReference type="NCBIfam" id="NF009806">
    <property type="entry name" value="PRK13290.1"/>
    <property type="match status" value="1"/>
</dbReference>
<dbReference type="PANTHER" id="PTHR39289">
    <property type="match status" value="1"/>
</dbReference>
<dbReference type="PANTHER" id="PTHR39289:SF1">
    <property type="entry name" value="L-ECTOINE SYNTHASE"/>
    <property type="match status" value="1"/>
</dbReference>
<dbReference type="Pfam" id="PF06339">
    <property type="entry name" value="Ectoine_synth"/>
    <property type="match status" value="1"/>
</dbReference>
<dbReference type="SUPFAM" id="SSF51182">
    <property type="entry name" value="RmlC-like cupins"/>
    <property type="match status" value="1"/>
</dbReference>
<gene>
    <name type="primary">ectC</name>
    <name type="ordered locus">HELO_2590</name>
</gene>